<comment type="function">
    <text evidence="1">Plays a central role in 2-thiolation of mcm(5)S(2)U at tRNA wobble positions of cytosolic tRNA(Lys), tRNA(Glu) and tRNA(Gln). Also essential during biosynthesis of the molybdenum cofactor. Acts by mediating the C-terminal thiocarboxylation of sulfur carriers urm1 and mocs2a. Its N-terminus first activates urm1 and mocs2a as acyl-adenylates (-COAMP), then the persulfide sulfur on the catalytic cysteine is transferred to urm1 and mocs2a to form thiocarboxylation (-COSH) of their C-terminus. The reaction probably involves hydrogen sulfide that is generated from the persulfide intermediate and that acts as a nucleophile towards urm1 and mocs2a. Subsequently, a transient disulfide bond is formed. Does not use thiosulfate as sulfur donor; nfs1 probably acting as a sulfur donor for thiocarboxylation reactions (By similarity).</text>
</comment>
<comment type="catalytic activity">
    <reaction evidence="3">
        <text>[molybdopterin-synthase sulfur-carrier protein]-C-terminal Gly-Gly + ATP + H(+) = [molybdopterin-synthase sulfur-carrier protein]-C-terminal Gly-Gly-AMP + diphosphate</text>
        <dbReference type="Rhea" id="RHEA:43616"/>
        <dbReference type="Rhea" id="RHEA-COMP:12159"/>
        <dbReference type="Rhea" id="RHEA-COMP:12202"/>
        <dbReference type="ChEBI" id="CHEBI:15378"/>
        <dbReference type="ChEBI" id="CHEBI:30616"/>
        <dbReference type="ChEBI" id="CHEBI:33019"/>
        <dbReference type="ChEBI" id="CHEBI:90618"/>
        <dbReference type="ChEBI" id="CHEBI:90778"/>
        <dbReference type="EC" id="2.7.7.80"/>
    </reaction>
</comment>
<comment type="catalytic activity">
    <reaction evidence="3">
        <text>[molybdopterin-synthase sulfur-carrier protein]-C-terminal Gly-Gly-AMP + S-sulfanyl-L-cysteinyl-[cysteine desulfurase] + AH2 = [molybdopterin-synthase sulfur-carrier protein]-C-terminal-Gly-aminoethanethioate + L-cysteinyl-[cysteine desulfurase] + A + AMP + 2 H(+)</text>
        <dbReference type="Rhea" id="RHEA:48612"/>
        <dbReference type="Rhea" id="RHEA-COMP:12157"/>
        <dbReference type="Rhea" id="RHEA-COMP:12158"/>
        <dbReference type="Rhea" id="RHEA-COMP:12159"/>
        <dbReference type="Rhea" id="RHEA-COMP:19907"/>
        <dbReference type="ChEBI" id="CHEBI:13193"/>
        <dbReference type="ChEBI" id="CHEBI:15378"/>
        <dbReference type="ChEBI" id="CHEBI:17499"/>
        <dbReference type="ChEBI" id="CHEBI:29950"/>
        <dbReference type="ChEBI" id="CHEBI:61963"/>
        <dbReference type="ChEBI" id="CHEBI:90618"/>
        <dbReference type="ChEBI" id="CHEBI:232372"/>
        <dbReference type="ChEBI" id="CHEBI:456215"/>
        <dbReference type="EC" id="2.8.1.11"/>
    </reaction>
</comment>
<comment type="cofactor">
    <cofactor evidence="3">
        <name>Zn(2+)</name>
        <dbReference type="ChEBI" id="CHEBI:29105"/>
    </cofactor>
    <text evidence="3">Binds 1 zinc ion per subunit.</text>
</comment>
<comment type="pathway">
    <text evidence="3">tRNA modification; 5-methoxycarbonylmethyl-2-thiouridine-tRNA biosynthesis.</text>
</comment>
<comment type="pathway">
    <text evidence="3">Cofactor biosynthesis; molybdopterin biosynthesis.</text>
</comment>
<comment type="subcellular location">
    <subcellularLocation>
        <location evidence="2">Cytoplasm</location>
        <location evidence="2">Cytosol</location>
    </subcellularLocation>
</comment>
<comment type="similarity">
    <text evidence="3">In the N-terminal section; belongs to the HesA/MoeB/ThiF family. UBA4 subfamily.</text>
</comment>
<name>UBA4_ASPNC</name>
<proteinExistence type="inferred from homology"/>
<feature type="chain" id="PRO_0000369220" description="Adenylyltransferase and sulfurtransferase uba4">
    <location>
        <begin position="1"/>
        <end position="482"/>
    </location>
</feature>
<feature type="domain" description="Rhodanese" evidence="3">
    <location>
        <begin position="362"/>
        <end position="480"/>
    </location>
</feature>
<feature type="active site" description="Glycyl thioester intermediate; for adenylyltransferase activity" evidence="3">
    <location>
        <position position="248"/>
    </location>
</feature>
<feature type="active site" description="Cysteine persulfide intermediate; for sulfurtransferase activity" evidence="3">
    <location>
        <position position="435"/>
    </location>
</feature>
<feature type="binding site" evidence="3">
    <location>
        <position position="93"/>
    </location>
    <ligand>
        <name>ATP</name>
        <dbReference type="ChEBI" id="CHEBI:30616"/>
    </ligand>
</feature>
<feature type="binding site" evidence="3">
    <location>
        <position position="114"/>
    </location>
    <ligand>
        <name>ATP</name>
        <dbReference type="ChEBI" id="CHEBI:30616"/>
    </ligand>
</feature>
<feature type="binding site" evidence="3">
    <location>
        <begin position="121"/>
        <end position="125"/>
    </location>
    <ligand>
        <name>ATP</name>
        <dbReference type="ChEBI" id="CHEBI:30616"/>
    </ligand>
</feature>
<feature type="binding site" evidence="3">
    <location>
        <position position="138"/>
    </location>
    <ligand>
        <name>ATP</name>
        <dbReference type="ChEBI" id="CHEBI:30616"/>
    </ligand>
</feature>
<feature type="binding site" evidence="3">
    <location>
        <begin position="182"/>
        <end position="183"/>
    </location>
    <ligand>
        <name>ATP</name>
        <dbReference type="ChEBI" id="CHEBI:30616"/>
    </ligand>
</feature>
<feature type="binding site" evidence="3">
    <location>
        <position position="231"/>
    </location>
    <ligand>
        <name>Zn(2+)</name>
        <dbReference type="ChEBI" id="CHEBI:29105"/>
    </ligand>
</feature>
<feature type="binding site" evidence="3">
    <location>
        <position position="234"/>
    </location>
    <ligand>
        <name>Zn(2+)</name>
        <dbReference type="ChEBI" id="CHEBI:29105"/>
    </ligand>
</feature>
<feature type="binding site" evidence="3">
    <location>
        <position position="309"/>
    </location>
    <ligand>
        <name>Zn(2+)</name>
        <dbReference type="ChEBI" id="CHEBI:29105"/>
    </ligand>
</feature>
<feature type="binding site" evidence="3">
    <location>
        <position position="312"/>
    </location>
    <ligand>
        <name>Zn(2+)</name>
        <dbReference type="ChEBI" id="CHEBI:29105"/>
    </ligand>
</feature>
<organism>
    <name type="scientific">Aspergillus niger (strain ATCC MYA-4892 / CBS 513.88 / FGSC A1513)</name>
    <dbReference type="NCBI Taxonomy" id="425011"/>
    <lineage>
        <taxon>Eukaryota</taxon>
        <taxon>Fungi</taxon>
        <taxon>Dikarya</taxon>
        <taxon>Ascomycota</taxon>
        <taxon>Pezizomycotina</taxon>
        <taxon>Eurotiomycetes</taxon>
        <taxon>Eurotiomycetidae</taxon>
        <taxon>Eurotiales</taxon>
        <taxon>Aspergillaceae</taxon>
        <taxon>Aspergillus</taxon>
        <taxon>Aspergillus subgen. Circumdati</taxon>
    </lineage>
</organism>
<gene>
    <name evidence="3" type="primary">uba4</name>
    <name evidence="3" type="synonym">cnxF</name>
    <name type="ORF">An14g04300</name>
</gene>
<dbReference type="EC" id="2.7.7.80" evidence="3"/>
<dbReference type="EC" id="2.8.1.11" evidence="3"/>
<dbReference type="EMBL" id="AM270321">
    <property type="protein sequence ID" value="CAK48522.1"/>
    <property type="molecule type" value="Genomic_DNA"/>
</dbReference>
<dbReference type="RefSeq" id="XP_001401054.1">
    <property type="nucleotide sequence ID" value="XM_001401017.1"/>
</dbReference>
<dbReference type="SMR" id="A2R3H4"/>
<dbReference type="EnsemblFungi" id="CAK48522">
    <property type="protein sequence ID" value="CAK48522"/>
    <property type="gene ID" value="An14g04300"/>
</dbReference>
<dbReference type="GeneID" id="4987287"/>
<dbReference type="KEGG" id="ang:An14g04300"/>
<dbReference type="VEuPathDB" id="FungiDB:An14g04300"/>
<dbReference type="HOGENOM" id="CLU_013325_1_2_1"/>
<dbReference type="UniPathway" id="UPA00344"/>
<dbReference type="UniPathway" id="UPA00988"/>
<dbReference type="Proteomes" id="UP000006706">
    <property type="component" value="Chromosome 1R"/>
</dbReference>
<dbReference type="GO" id="GO:0005829">
    <property type="term" value="C:cytosol"/>
    <property type="evidence" value="ECO:0007669"/>
    <property type="project" value="InterPro"/>
</dbReference>
<dbReference type="GO" id="GO:0070733">
    <property type="term" value="F:AMPylase activity"/>
    <property type="evidence" value="ECO:0007669"/>
    <property type="project" value="EnsemblFungi"/>
</dbReference>
<dbReference type="GO" id="GO:0005524">
    <property type="term" value="F:ATP binding"/>
    <property type="evidence" value="ECO:0007669"/>
    <property type="project" value="UniProtKB-KW"/>
</dbReference>
<dbReference type="GO" id="GO:0042802">
    <property type="term" value="F:identical protein binding"/>
    <property type="evidence" value="ECO:0007669"/>
    <property type="project" value="EnsemblFungi"/>
</dbReference>
<dbReference type="GO" id="GO:0046872">
    <property type="term" value="F:metal ion binding"/>
    <property type="evidence" value="ECO:0007669"/>
    <property type="project" value="UniProtKB-KW"/>
</dbReference>
<dbReference type="GO" id="GO:0061605">
    <property type="term" value="F:molybdopterin-synthase adenylyltransferase activity"/>
    <property type="evidence" value="ECO:0007669"/>
    <property type="project" value="UniProtKB-EC"/>
</dbReference>
<dbReference type="GO" id="GO:0061604">
    <property type="term" value="F:molybdopterin-synthase sulfurtransferase activity"/>
    <property type="evidence" value="ECO:0007669"/>
    <property type="project" value="UniProtKB-EC"/>
</dbReference>
<dbReference type="GO" id="GO:0004792">
    <property type="term" value="F:thiosulfate-cyanide sulfurtransferase activity"/>
    <property type="evidence" value="ECO:0007669"/>
    <property type="project" value="EnsemblFungi"/>
</dbReference>
<dbReference type="GO" id="GO:0042292">
    <property type="term" value="F:URM1 activating enzyme activity"/>
    <property type="evidence" value="ECO:0007669"/>
    <property type="project" value="EnsemblFungi"/>
</dbReference>
<dbReference type="GO" id="GO:0007114">
    <property type="term" value="P:cell budding"/>
    <property type="evidence" value="ECO:0007669"/>
    <property type="project" value="EnsemblFungi"/>
</dbReference>
<dbReference type="GO" id="GO:0034599">
    <property type="term" value="P:cellular response to oxidative stress"/>
    <property type="evidence" value="ECO:0007669"/>
    <property type="project" value="EnsemblFungi"/>
</dbReference>
<dbReference type="GO" id="GO:0001403">
    <property type="term" value="P:invasive growth in response to glucose limitation"/>
    <property type="evidence" value="ECO:0007669"/>
    <property type="project" value="EnsemblFungi"/>
</dbReference>
<dbReference type="GO" id="GO:0006777">
    <property type="term" value="P:Mo-molybdopterin cofactor biosynthetic process"/>
    <property type="evidence" value="ECO:0007669"/>
    <property type="project" value="UniProtKB-UniRule"/>
</dbReference>
<dbReference type="GO" id="GO:0032447">
    <property type="term" value="P:protein urmylation"/>
    <property type="evidence" value="ECO:0007669"/>
    <property type="project" value="EnsemblFungi"/>
</dbReference>
<dbReference type="GO" id="GO:2000220">
    <property type="term" value="P:regulation of pseudohyphal growth"/>
    <property type="evidence" value="ECO:0007669"/>
    <property type="project" value="EnsemblFungi"/>
</dbReference>
<dbReference type="GO" id="GO:0002143">
    <property type="term" value="P:tRNA wobble position uridine thiolation"/>
    <property type="evidence" value="ECO:0007669"/>
    <property type="project" value="EnsemblFungi"/>
</dbReference>
<dbReference type="CDD" id="cd00757">
    <property type="entry name" value="ThiF_MoeB_HesA_family"/>
    <property type="match status" value="1"/>
</dbReference>
<dbReference type="FunFam" id="3.40.50.720:FF:000033">
    <property type="entry name" value="Adenylyltransferase and sulfurtransferase MOCS3"/>
    <property type="match status" value="1"/>
</dbReference>
<dbReference type="FunFam" id="3.40.250.10:FF:000096">
    <property type="entry name" value="Adenylyltransferase and sulfurtransferase uba4"/>
    <property type="match status" value="1"/>
</dbReference>
<dbReference type="Gene3D" id="3.40.50.720">
    <property type="entry name" value="NAD(P)-binding Rossmann-like Domain"/>
    <property type="match status" value="1"/>
</dbReference>
<dbReference type="Gene3D" id="3.40.250.10">
    <property type="entry name" value="Rhodanese-like domain"/>
    <property type="match status" value="1"/>
</dbReference>
<dbReference type="HAMAP" id="MF_03049">
    <property type="entry name" value="MOCS3_Uba4"/>
    <property type="match status" value="1"/>
</dbReference>
<dbReference type="InterPro" id="IPR028885">
    <property type="entry name" value="MOCS3/Uba4"/>
</dbReference>
<dbReference type="InterPro" id="IPR001763">
    <property type="entry name" value="Rhodanese-like_dom"/>
</dbReference>
<dbReference type="InterPro" id="IPR036873">
    <property type="entry name" value="Rhodanese-like_dom_sf"/>
</dbReference>
<dbReference type="InterPro" id="IPR045886">
    <property type="entry name" value="ThiF/MoeB/HesA"/>
</dbReference>
<dbReference type="InterPro" id="IPR000594">
    <property type="entry name" value="ThiF_NAD_FAD-bd"/>
</dbReference>
<dbReference type="InterPro" id="IPR035985">
    <property type="entry name" value="Ubiquitin-activating_enz"/>
</dbReference>
<dbReference type="PANTHER" id="PTHR10953:SF102">
    <property type="entry name" value="ADENYLYLTRANSFERASE AND SULFURTRANSFERASE MOCS3"/>
    <property type="match status" value="1"/>
</dbReference>
<dbReference type="PANTHER" id="PTHR10953">
    <property type="entry name" value="UBIQUITIN-ACTIVATING ENZYME E1"/>
    <property type="match status" value="1"/>
</dbReference>
<dbReference type="Pfam" id="PF00581">
    <property type="entry name" value="Rhodanese"/>
    <property type="match status" value="1"/>
</dbReference>
<dbReference type="Pfam" id="PF00899">
    <property type="entry name" value="ThiF"/>
    <property type="match status" value="1"/>
</dbReference>
<dbReference type="SMART" id="SM00450">
    <property type="entry name" value="RHOD"/>
    <property type="match status" value="1"/>
</dbReference>
<dbReference type="SUPFAM" id="SSF69572">
    <property type="entry name" value="Activating enzymes of the ubiquitin-like proteins"/>
    <property type="match status" value="1"/>
</dbReference>
<dbReference type="PROSITE" id="PS50206">
    <property type="entry name" value="RHODANESE_3"/>
    <property type="match status" value="1"/>
</dbReference>
<protein>
    <recommendedName>
        <fullName evidence="3">Adenylyltransferase and sulfurtransferase uba4</fullName>
    </recommendedName>
    <alternativeName>
        <fullName evidence="3">Common component for nitrate reductase and xanthine dehydrogenase protein F</fullName>
    </alternativeName>
    <alternativeName>
        <fullName evidence="3">Ubiquitin-like protein activator 4</fullName>
    </alternativeName>
    <domain>
        <recommendedName>
            <fullName evidence="3">Molybdopterin-synthase adenylyltransferase</fullName>
            <ecNumber evidence="3">2.7.7.80</ecNumber>
        </recommendedName>
        <alternativeName>
            <fullName evidence="3">Adenylyltransferase uba4</fullName>
        </alternativeName>
        <alternativeName>
            <fullName evidence="3">Sulfur carrier protein MOCS2A adenylyltransferase</fullName>
        </alternativeName>
    </domain>
    <domain>
        <recommendedName>
            <fullName evidence="3">Molybdopterin-synthase sulfurtransferase</fullName>
            <ecNumber evidence="3">2.8.1.11</ecNumber>
        </recommendedName>
        <alternativeName>
            <fullName evidence="3">Sulfur carrier protein MOCS2A sulfurtransferase</fullName>
        </alternativeName>
        <alternativeName>
            <fullName evidence="3">Sulfurtransferase uba4</fullName>
        </alternativeName>
    </domain>
</protein>
<accession>A2R3H4</accession>
<reference key="1">
    <citation type="journal article" date="2007" name="Nat. Biotechnol.">
        <title>Genome sequencing and analysis of the versatile cell factory Aspergillus niger CBS 513.88.</title>
        <authorList>
            <person name="Pel H.J."/>
            <person name="de Winde J.H."/>
            <person name="Archer D.B."/>
            <person name="Dyer P.S."/>
            <person name="Hofmann G."/>
            <person name="Schaap P.J."/>
            <person name="Turner G."/>
            <person name="de Vries R.P."/>
            <person name="Albang R."/>
            <person name="Albermann K."/>
            <person name="Andersen M.R."/>
            <person name="Bendtsen J.D."/>
            <person name="Benen J.A.E."/>
            <person name="van den Berg M."/>
            <person name="Breestraat S."/>
            <person name="Caddick M.X."/>
            <person name="Contreras R."/>
            <person name="Cornell M."/>
            <person name="Coutinho P.M."/>
            <person name="Danchin E.G.J."/>
            <person name="Debets A.J.M."/>
            <person name="Dekker P."/>
            <person name="van Dijck P.W.M."/>
            <person name="van Dijk A."/>
            <person name="Dijkhuizen L."/>
            <person name="Driessen A.J.M."/>
            <person name="d'Enfert C."/>
            <person name="Geysens S."/>
            <person name="Goosen C."/>
            <person name="Groot G.S.P."/>
            <person name="de Groot P.W.J."/>
            <person name="Guillemette T."/>
            <person name="Henrissat B."/>
            <person name="Herweijer M."/>
            <person name="van den Hombergh J.P.T.W."/>
            <person name="van den Hondel C.A.M.J.J."/>
            <person name="van der Heijden R.T.J.M."/>
            <person name="van der Kaaij R.M."/>
            <person name="Klis F.M."/>
            <person name="Kools H.J."/>
            <person name="Kubicek C.P."/>
            <person name="van Kuyk P.A."/>
            <person name="Lauber J."/>
            <person name="Lu X."/>
            <person name="van der Maarel M.J.E.C."/>
            <person name="Meulenberg R."/>
            <person name="Menke H."/>
            <person name="Mortimer M.A."/>
            <person name="Nielsen J."/>
            <person name="Oliver S.G."/>
            <person name="Olsthoorn M."/>
            <person name="Pal K."/>
            <person name="van Peij N.N.M.E."/>
            <person name="Ram A.F.J."/>
            <person name="Rinas U."/>
            <person name="Roubos J.A."/>
            <person name="Sagt C.M.J."/>
            <person name="Schmoll M."/>
            <person name="Sun J."/>
            <person name="Ussery D."/>
            <person name="Varga J."/>
            <person name="Vervecken W."/>
            <person name="van de Vondervoort P.J.J."/>
            <person name="Wedler H."/>
            <person name="Woesten H.A.B."/>
            <person name="Zeng A.-P."/>
            <person name="van Ooyen A.J.J."/>
            <person name="Visser J."/>
            <person name="Stam H."/>
        </authorList>
    </citation>
    <scope>NUCLEOTIDE SEQUENCE [LARGE SCALE GENOMIC DNA]</scope>
    <source>
        <strain>ATCC MYA-4892 / CBS 513.88 / FGSC A1513</strain>
    </source>
</reference>
<evidence type="ECO:0000250" key="1"/>
<evidence type="ECO:0000250" key="2">
    <source>
        <dbReference type="UniProtKB" id="P38820"/>
    </source>
</evidence>
<evidence type="ECO:0000255" key="3">
    <source>
        <dbReference type="HAMAP-Rule" id="MF_03049"/>
    </source>
</evidence>
<sequence length="482" mass="52014">MNGVEQTCASLRTQIAATEAKLADLKRELEIAEQAAASHKQNAADAEGGSERRWPLLDEEYRRYGRQMIVPQLGIQGQLKLRSAKVLIVGAGGLGCPAALYLAGAGVGTLGLVDGDAVESSNLHRQVLHRTRNIGKLKVDSAIEYLKELNPHSKYIAHREHLAPEAAPEIFSNYDLILDCTDNPATRYLISDTAVLLGKPLVSASALRTEGQLMVLNNPPRPAGDKTGGPCYRCVFPKPPPANTVTSCADGGIVGPVVGTMGVLQALEAIKVITADETTTPPPPSLHIFSAYSTPLFRTIKLRSRRPNCAVCSAEASVTVDTVRSGSTDYIFFCGTTGPENLLSPEERITPLEYRTRHHDKEEKEPTIIDVREKVQYDICSLENSINIPISTILASASSSMSNGDSLADGVPALPSWVPPDVASSQSTDPVYVVCRLGNDSQVAVKKLKELGLDQGGKRVVADIRGGFRAWKEQVDPEWPEY</sequence>
<keyword id="KW-0067">ATP-binding</keyword>
<keyword id="KW-0963">Cytoplasm</keyword>
<keyword id="KW-0479">Metal-binding</keyword>
<keyword id="KW-0501">Molybdenum cofactor biosynthesis</keyword>
<keyword id="KW-0511">Multifunctional enzyme</keyword>
<keyword id="KW-0547">Nucleotide-binding</keyword>
<keyword id="KW-0548">Nucleotidyltransferase</keyword>
<keyword id="KW-1185">Reference proteome</keyword>
<keyword id="KW-0808">Transferase</keyword>
<keyword id="KW-0819">tRNA processing</keyword>
<keyword id="KW-0833">Ubl conjugation pathway</keyword>
<keyword id="KW-0862">Zinc</keyword>